<reference key="1">
    <citation type="journal article" date="1998" name="Nature">
        <title>The complete genome of the hyperthermophilic bacterium Aquifex aeolicus.</title>
        <authorList>
            <person name="Deckert G."/>
            <person name="Warren P.V."/>
            <person name="Gaasterland T."/>
            <person name="Young W.G."/>
            <person name="Lenox A.L."/>
            <person name="Graham D.E."/>
            <person name="Overbeek R."/>
            <person name="Snead M.A."/>
            <person name="Keller M."/>
            <person name="Aujay M."/>
            <person name="Huber R."/>
            <person name="Feldman R.A."/>
            <person name="Short J.M."/>
            <person name="Olsen G.J."/>
            <person name="Swanson R.V."/>
        </authorList>
    </citation>
    <scope>NUCLEOTIDE SEQUENCE [LARGE SCALE GENOMIC DNA]</scope>
    <source>
        <strain>VF5</strain>
    </source>
</reference>
<keyword id="KW-0614">Plasmid</keyword>
<keyword id="KW-1185">Reference proteome</keyword>
<protein>
    <recommendedName>
        <fullName>Uncharacterized protein aq_aa31</fullName>
    </recommendedName>
</protein>
<gene>
    <name type="ordered locus">aq_aa31</name>
</gene>
<name>YZ31_AQUAE</name>
<sequence>MSTGNIEAGVYYESDGSDEHIKKLREYFEKIKEEYSESFGDDLLGFTVNPVKPQSFEFILVGNDDIGLHSYVEVKLQEGIVLGKITSIFAYDMGFFANPFTSQESSVFAPVEDFKTIFSKGKDDEWKKAAIYAYLNNNGNKLKIATADVIGILKDGKLDILRNPFHVGEPVYKISEKTLGKILKKNFSGRDMEVPVKVGVIENSDIDVFVDANEVISKHMLVLGTTGSGKSYFTKRFISSLLESDKEVEVYVLDPHGEYFNDLKSYIDEN</sequence>
<geneLocation type="plasmid">
    <name>ece1</name>
</geneLocation>
<proteinExistence type="predicted"/>
<accession>O66421</accession>
<dbReference type="EMBL" id="AE000667">
    <property type="protein sequence ID" value="AAC07973.1"/>
    <property type="molecule type" value="Genomic_DNA"/>
</dbReference>
<dbReference type="RefSeq" id="NP_046421.1">
    <property type="nucleotide sequence ID" value="NC_001880.1"/>
</dbReference>
<dbReference type="RefSeq" id="WP_010890567.1">
    <property type="nucleotide sequence ID" value="NC_001880.1"/>
</dbReference>
<dbReference type="SMR" id="O66421"/>
<dbReference type="EnsemblBacteria" id="AAC07973">
    <property type="protein sequence ID" value="AAC07973"/>
    <property type="gene ID" value="aq_aa31"/>
</dbReference>
<dbReference type="KEGG" id="aae:aq_aa31"/>
<dbReference type="PATRIC" id="fig|224324.8.peg.1751"/>
<dbReference type="eggNOG" id="COG0433">
    <property type="taxonomic scope" value="Bacteria"/>
</dbReference>
<dbReference type="HOGENOM" id="CLU_1029131_0_0_0"/>
<dbReference type="InParanoid" id="O66421"/>
<dbReference type="OrthoDB" id="9806951at2"/>
<dbReference type="Proteomes" id="UP000000798">
    <property type="component" value="Plasmid ece1"/>
</dbReference>
<dbReference type="Gene3D" id="3.40.50.300">
    <property type="entry name" value="P-loop containing nucleotide triphosphate hydrolases"/>
    <property type="match status" value="1"/>
</dbReference>
<dbReference type="InterPro" id="IPR008571">
    <property type="entry name" value="HerA-like"/>
</dbReference>
<dbReference type="InterPro" id="IPR018538">
    <property type="entry name" value="HerA_barrel_dom"/>
</dbReference>
<dbReference type="InterPro" id="IPR002789">
    <property type="entry name" value="HerA_central"/>
</dbReference>
<dbReference type="InterPro" id="IPR027417">
    <property type="entry name" value="P-loop_NTPase"/>
</dbReference>
<dbReference type="PANTHER" id="PTHR42957">
    <property type="entry name" value="HELICASE MJ1565-RELATED"/>
    <property type="match status" value="1"/>
</dbReference>
<dbReference type="PANTHER" id="PTHR42957:SF1">
    <property type="entry name" value="HELICASE MJ1565-RELATED"/>
    <property type="match status" value="1"/>
</dbReference>
<dbReference type="Pfam" id="PF01935">
    <property type="entry name" value="DUF87"/>
    <property type="match status" value="1"/>
</dbReference>
<dbReference type="Pfam" id="PF09378">
    <property type="entry name" value="HAS-barrel"/>
    <property type="match status" value="1"/>
</dbReference>
<dbReference type="SUPFAM" id="SSF52540">
    <property type="entry name" value="P-loop containing nucleoside triphosphate hydrolases"/>
    <property type="match status" value="1"/>
</dbReference>
<feature type="chain" id="PRO_0000187000" description="Uncharacterized protein aq_aa31">
    <location>
        <begin position="1"/>
        <end position="270"/>
    </location>
</feature>
<organism>
    <name type="scientific">Aquifex aeolicus (strain VF5)</name>
    <dbReference type="NCBI Taxonomy" id="224324"/>
    <lineage>
        <taxon>Bacteria</taxon>
        <taxon>Pseudomonadati</taxon>
        <taxon>Aquificota</taxon>
        <taxon>Aquificia</taxon>
        <taxon>Aquificales</taxon>
        <taxon>Aquificaceae</taxon>
        <taxon>Aquifex</taxon>
    </lineage>
</organism>